<dbReference type="EC" id="1.1.1.25" evidence="1"/>
<dbReference type="EMBL" id="CP001161">
    <property type="protein sequence ID" value="ACL30837.1"/>
    <property type="molecule type" value="Genomic_DNA"/>
</dbReference>
<dbReference type="RefSeq" id="WP_009874444.1">
    <property type="nucleotide sequence ID" value="NC_011833.1"/>
</dbReference>
<dbReference type="SMR" id="B8D9R6"/>
<dbReference type="KEGG" id="bap:BUAP5A_486"/>
<dbReference type="HOGENOM" id="CLU_044063_2_1_6"/>
<dbReference type="OrthoDB" id="9776868at2"/>
<dbReference type="UniPathway" id="UPA00053">
    <property type="reaction ID" value="UER00087"/>
</dbReference>
<dbReference type="Proteomes" id="UP000006904">
    <property type="component" value="Chromosome"/>
</dbReference>
<dbReference type="GO" id="GO:0005829">
    <property type="term" value="C:cytosol"/>
    <property type="evidence" value="ECO:0007669"/>
    <property type="project" value="TreeGrafter"/>
</dbReference>
<dbReference type="GO" id="GO:0050661">
    <property type="term" value="F:NADP binding"/>
    <property type="evidence" value="ECO:0007669"/>
    <property type="project" value="InterPro"/>
</dbReference>
<dbReference type="GO" id="GO:0004764">
    <property type="term" value="F:shikimate 3-dehydrogenase (NADP+) activity"/>
    <property type="evidence" value="ECO:0007669"/>
    <property type="project" value="UniProtKB-UniRule"/>
</dbReference>
<dbReference type="GO" id="GO:0008652">
    <property type="term" value="P:amino acid biosynthetic process"/>
    <property type="evidence" value="ECO:0007669"/>
    <property type="project" value="UniProtKB-KW"/>
</dbReference>
<dbReference type="GO" id="GO:0009073">
    <property type="term" value="P:aromatic amino acid family biosynthetic process"/>
    <property type="evidence" value="ECO:0007669"/>
    <property type="project" value="UniProtKB-KW"/>
</dbReference>
<dbReference type="GO" id="GO:0009423">
    <property type="term" value="P:chorismate biosynthetic process"/>
    <property type="evidence" value="ECO:0007669"/>
    <property type="project" value="UniProtKB-UniRule"/>
</dbReference>
<dbReference type="GO" id="GO:0019632">
    <property type="term" value="P:shikimate metabolic process"/>
    <property type="evidence" value="ECO:0007669"/>
    <property type="project" value="InterPro"/>
</dbReference>
<dbReference type="CDD" id="cd01065">
    <property type="entry name" value="NAD_bind_Shikimate_DH"/>
    <property type="match status" value="1"/>
</dbReference>
<dbReference type="FunFam" id="3.40.50.10860:FF:000006">
    <property type="entry name" value="Shikimate dehydrogenase (NADP(+))"/>
    <property type="match status" value="1"/>
</dbReference>
<dbReference type="Gene3D" id="3.40.50.10860">
    <property type="entry name" value="Leucine Dehydrogenase, chain A, domain 1"/>
    <property type="match status" value="1"/>
</dbReference>
<dbReference type="Gene3D" id="3.40.50.720">
    <property type="entry name" value="NAD(P)-binding Rossmann-like Domain"/>
    <property type="match status" value="1"/>
</dbReference>
<dbReference type="HAMAP" id="MF_00222">
    <property type="entry name" value="Shikimate_DH_AroE"/>
    <property type="match status" value="1"/>
</dbReference>
<dbReference type="InterPro" id="IPR046346">
    <property type="entry name" value="Aminoacid_DH-like_N_sf"/>
</dbReference>
<dbReference type="InterPro" id="IPR036291">
    <property type="entry name" value="NAD(P)-bd_dom_sf"/>
</dbReference>
<dbReference type="InterPro" id="IPR041121">
    <property type="entry name" value="SDH_C"/>
</dbReference>
<dbReference type="InterPro" id="IPR011342">
    <property type="entry name" value="Shikimate_DH"/>
</dbReference>
<dbReference type="InterPro" id="IPR013708">
    <property type="entry name" value="Shikimate_DH-bd_N"/>
</dbReference>
<dbReference type="InterPro" id="IPR022893">
    <property type="entry name" value="Shikimate_DH_fam"/>
</dbReference>
<dbReference type="InterPro" id="IPR006151">
    <property type="entry name" value="Shikm_DH/Glu-tRNA_Rdtase"/>
</dbReference>
<dbReference type="NCBIfam" id="TIGR00507">
    <property type="entry name" value="aroE"/>
    <property type="match status" value="1"/>
</dbReference>
<dbReference type="NCBIfam" id="NF001310">
    <property type="entry name" value="PRK00258.1-2"/>
    <property type="match status" value="1"/>
</dbReference>
<dbReference type="PANTHER" id="PTHR21089:SF1">
    <property type="entry name" value="BIFUNCTIONAL 3-DEHYDROQUINATE DEHYDRATASE_SHIKIMATE DEHYDROGENASE, CHLOROPLASTIC"/>
    <property type="match status" value="1"/>
</dbReference>
<dbReference type="PANTHER" id="PTHR21089">
    <property type="entry name" value="SHIKIMATE DEHYDROGENASE"/>
    <property type="match status" value="1"/>
</dbReference>
<dbReference type="Pfam" id="PF18317">
    <property type="entry name" value="SDH_C"/>
    <property type="match status" value="1"/>
</dbReference>
<dbReference type="Pfam" id="PF01488">
    <property type="entry name" value="Shikimate_DH"/>
    <property type="match status" value="1"/>
</dbReference>
<dbReference type="Pfam" id="PF08501">
    <property type="entry name" value="Shikimate_dh_N"/>
    <property type="match status" value="1"/>
</dbReference>
<dbReference type="SUPFAM" id="SSF53223">
    <property type="entry name" value="Aminoacid dehydrogenase-like, N-terminal domain"/>
    <property type="match status" value="1"/>
</dbReference>
<dbReference type="SUPFAM" id="SSF51735">
    <property type="entry name" value="NAD(P)-binding Rossmann-fold domains"/>
    <property type="match status" value="1"/>
</dbReference>
<feature type="chain" id="PRO_1000124877" description="Shikimate dehydrogenase (NADP(+))">
    <location>
        <begin position="1"/>
        <end position="273"/>
    </location>
</feature>
<feature type="active site" description="Proton acceptor" evidence="1">
    <location>
        <position position="70"/>
    </location>
</feature>
<feature type="binding site" evidence="1">
    <location>
        <begin position="19"/>
        <end position="21"/>
    </location>
    <ligand>
        <name>shikimate</name>
        <dbReference type="ChEBI" id="CHEBI:36208"/>
    </ligand>
</feature>
<feature type="binding site" evidence="1">
    <location>
        <position position="66"/>
    </location>
    <ligand>
        <name>shikimate</name>
        <dbReference type="ChEBI" id="CHEBI:36208"/>
    </ligand>
</feature>
<feature type="binding site" evidence="1">
    <location>
        <position position="91"/>
    </location>
    <ligand>
        <name>shikimate</name>
        <dbReference type="ChEBI" id="CHEBI:36208"/>
    </ligand>
</feature>
<feature type="binding site" evidence="1">
    <location>
        <position position="107"/>
    </location>
    <ligand>
        <name>shikimate</name>
        <dbReference type="ChEBI" id="CHEBI:36208"/>
    </ligand>
</feature>
<feature type="binding site" evidence="1">
    <location>
        <begin position="131"/>
        <end position="135"/>
    </location>
    <ligand>
        <name>NADP(+)</name>
        <dbReference type="ChEBI" id="CHEBI:58349"/>
    </ligand>
</feature>
<feature type="binding site" evidence="1">
    <location>
        <position position="218"/>
    </location>
    <ligand>
        <name>NADP(+)</name>
        <dbReference type="ChEBI" id="CHEBI:58349"/>
    </ligand>
</feature>
<feature type="binding site" evidence="1">
    <location>
        <position position="220"/>
    </location>
    <ligand>
        <name>shikimate</name>
        <dbReference type="ChEBI" id="CHEBI:36208"/>
    </ligand>
</feature>
<feature type="binding site" evidence="1">
    <location>
        <position position="242"/>
    </location>
    <ligand>
        <name>NADP(+)</name>
        <dbReference type="ChEBI" id="CHEBI:58349"/>
    </ligand>
</feature>
<proteinExistence type="inferred from homology"/>
<protein>
    <recommendedName>
        <fullName evidence="1">Shikimate dehydrogenase (NADP(+))</fullName>
        <shortName evidence="1">SDH</shortName>
        <ecNumber evidence="1">1.1.1.25</ecNumber>
    </recommendedName>
</protein>
<comment type="function">
    <text evidence="1">Involved in the biosynthesis of the chorismate, which leads to the biosynthesis of aromatic amino acids. Catalyzes the reversible NADPH linked reduction of 3-dehydroshikimate (DHSA) to yield shikimate (SA).</text>
</comment>
<comment type="catalytic activity">
    <reaction evidence="1">
        <text>shikimate + NADP(+) = 3-dehydroshikimate + NADPH + H(+)</text>
        <dbReference type="Rhea" id="RHEA:17737"/>
        <dbReference type="ChEBI" id="CHEBI:15378"/>
        <dbReference type="ChEBI" id="CHEBI:16630"/>
        <dbReference type="ChEBI" id="CHEBI:36208"/>
        <dbReference type="ChEBI" id="CHEBI:57783"/>
        <dbReference type="ChEBI" id="CHEBI:58349"/>
        <dbReference type="EC" id="1.1.1.25"/>
    </reaction>
</comment>
<comment type="pathway">
    <text evidence="1">Metabolic intermediate biosynthesis; chorismate biosynthesis; chorismate from D-erythrose 4-phosphate and phosphoenolpyruvate: step 4/7.</text>
</comment>
<comment type="subunit">
    <text evidence="1">Homodimer.</text>
</comment>
<comment type="similarity">
    <text evidence="1">Belongs to the shikimate dehydrogenase family.</text>
</comment>
<keyword id="KW-0028">Amino-acid biosynthesis</keyword>
<keyword id="KW-0057">Aromatic amino acid biosynthesis</keyword>
<keyword id="KW-0521">NADP</keyword>
<keyword id="KW-0560">Oxidoreductase</keyword>
<name>AROE_BUCA5</name>
<reference key="1">
    <citation type="journal article" date="2009" name="Science">
        <title>The dynamics and time scale of ongoing genomic erosion in symbiotic bacteria.</title>
        <authorList>
            <person name="Moran N.A."/>
            <person name="McLaughlin H.J."/>
            <person name="Sorek R."/>
        </authorList>
    </citation>
    <scope>NUCLEOTIDE SEQUENCE [LARGE SCALE GENOMIC DNA]</scope>
    <source>
        <strain>5A</strain>
    </source>
</reference>
<evidence type="ECO:0000255" key="1">
    <source>
        <dbReference type="HAMAP-Rule" id="MF_00222"/>
    </source>
</evidence>
<organism>
    <name type="scientific">Buchnera aphidicola subsp. Acyrthosiphon pisum (strain 5A)</name>
    <dbReference type="NCBI Taxonomy" id="563178"/>
    <lineage>
        <taxon>Bacteria</taxon>
        <taxon>Pseudomonadati</taxon>
        <taxon>Pseudomonadota</taxon>
        <taxon>Gammaproteobacteria</taxon>
        <taxon>Enterobacterales</taxon>
        <taxon>Erwiniaceae</taxon>
        <taxon>Buchnera</taxon>
    </lineage>
</organism>
<accession>B8D9R6</accession>
<gene>
    <name evidence="1" type="primary">aroE</name>
    <name type="ordered locus">BUAP5A_486</name>
</gene>
<sequence>MFKCKNFNYAVFGNPINHSKSPEIHSLFSKQTGISHFYKSCNVPLNSLYAVLQDFFKKDGRGANITAPFKQEAYFFCNKLTKRAEVAQSVNTLKKIDNCNILGDNTDGIGLLSDLIRLNFIKKNYSILIIGAGGAARGVLFPLLSYGCSICIFNRTVLNAEKLVLQFHKYGNINVFNTNSLHVKSFDLIINATSHFIQDKDNFIPFSCVSSKTCFYDMNYQTDNTFFFDWSRKTGSNFFSNGIGMLVFQAAHSFFLWHNVLPEIDYIIDLLNK</sequence>